<dbReference type="EC" id="4.1.1.19" evidence="1"/>
<dbReference type="EMBL" id="CP001164">
    <property type="protein sequence ID" value="ACI37609.1"/>
    <property type="molecule type" value="Genomic_DNA"/>
</dbReference>
<dbReference type="SMR" id="B5YQD6"/>
<dbReference type="KEGG" id="ecf:ECH74115_4241"/>
<dbReference type="HOGENOM" id="CLU_027243_1_0_6"/>
<dbReference type="UniPathway" id="UPA00186">
    <property type="reaction ID" value="UER00284"/>
</dbReference>
<dbReference type="GO" id="GO:0008792">
    <property type="term" value="F:arginine decarboxylase activity"/>
    <property type="evidence" value="ECO:0007669"/>
    <property type="project" value="UniProtKB-UniRule"/>
</dbReference>
<dbReference type="GO" id="GO:0046872">
    <property type="term" value="F:metal ion binding"/>
    <property type="evidence" value="ECO:0007669"/>
    <property type="project" value="UniProtKB-KW"/>
</dbReference>
<dbReference type="GO" id="GO:0006527">
    <property type="term" value="P:arginine catabolic process"/>
    <property type="evidence" value="ECO:0007669"/>
    <property type="project" value="InterPro"/>
</dbReference>
<dbReference type="GO" id="GO:0033388">
    <property type="term" value="P:putrescine biosynthetic process from arginine"/>
    <property type="evidence" value="ECO:0007669"/>
    <property type="project" value="TreeGrafter"/>
</dbReference>
<dbReference type="GO" id="GO:0008295">
    <property type="term" value="P:spermidine biosynthetic process"/>
    <property type="evidence" value="ECO:0007669"/>
    <property type="project" value="UniProtKB-UniRule"/>
</dbReference>
<dbReference type="CDD" id="cd06830">
    <property type="entry name" value="PLPDE_III_ADC"/>
    <property type="match status" value="1"/>
</dbReference>
<dbReference type="FunFam" id="1.10.287.3440:FF:000001">
    <property type="entry name" value="Biosynthetic arginine decarboxylase"/>
    <property type="match status" value="1"/>
</dbReference>
<dbReference type="FunFam" id="1.20.58.930:FF:000001">
    <property type="entry name" value="Biosynthetic arginine decarboxylase"/>
    <property type="match status" value="1"/>
</dbReference>
<dbReference type="FunFam" id="2.40.37.10:FF:000001">
    <property type="entry name" value="Biosynthetic arginine decarboxylase"/>
    <property type="match status" value="1"/>
</dbReference>
<dbReference type="FunFam" id="3.20.20.10:FF:000001">
    <property type="entry name" value="Biosynthetic arginine decarboxylase"/>
    <property type="match status" value="1"/>
</dbReference>
<dbReference type="Gene3D" id="1.10.287.3440">
    <property type="match status" value="1"/>
</dbReference>
<dbReference type="Gene3D" id="1.20.58.930">
    <property type="match status" value="1"/>
</dbReference>
<dbReference type="Gene3D" id="3.20.20.10">
    <property type="entry name" value="Alanine racemase"/>
    <property type="match status" value="1"/>
</dbReference>
<dbReference type="Gene3D" id="2.40.37.10">
    <property type="entry name" value="Lyase, Ornithine Decarboxylase, Chain A, domain 1"/>
    <property type="match status" value="1"/>
</dbReference>
<dbReference type="HAMAP" id="MF_01417">
    <property type="entry name" value="SpeA"/>
    <property type="match status" value="1"/>
</dbReference>
<dbReference type="InterPro" id="IPR009006">
    <property type="entry name" value="Ala_racemase/Decarboxylase_C"/>
</dbReference>
<dbReference type="InterPro" id="IPR040634">
    <property type="entry name" value="Arg_decarb_HB"/>
</dbReference>
<dbReference type="InterPro" id="IPR041128">
    <property type="entry name" value="Arg_decarbox_C"/>
</dbReference>
<dbReference type="InterPro" id="IPR002985">
    <property type="entry name" value="Arg_decrbxlase"/>
</dbReference>
<dbReference type="InterPro" id="IPR022657">
    <property type="entry name" value="De-COase2_CS"/>
</dbReference>
<dbReference type="InterPro" id="IPR022644">
    <property type="entry name" value="De-COase2_N"/>
</dbReference>
<dbReference type="InterPro" id="IPR022653">
    <property type="entry name" value="De-COase2_pyr-phos_BS"/>
</dbReference>
<dbReference type="InterPro" id="IPR000183">
    <property type="entry name" value="Orn/DAP/Arg_de-COase"/>
</dbReference>
<dbReference type="InterPro" id="IPR029066">
    <property type="entry name" value="PLP-binding_barrel"/>
</dbReference>
<dbReference type="NCBIfam" id="NF003763">
    <property type="entry name" value="PRK05354.1"/>
    <property type="match status" value="1"/>
</dbReference>
<dbReference type="NCBIfam" id="TIGR01273">
    <property type="entry name" value="speA"/>
    <property type="match status" value="1"/>
</dbReference>
<dbReference type="PANTHER" id="PTHR43295">
    <property type="entry name" value="ARGININE DECARBOXYLASE"/>
    <property type="match status" value="1"/>
</dbReference>
<dbReference type="PANTHER" id="PTHR43295:SF9">
    <property type="entry name" value="BIOSYNTHETIC ARGININE DECARBOXYLASE"/>
    <property type="match status" value="1"/>
</dbReference>
<dbReference type="Pfam" id="PF17810">
    <property type="entry name" value="Arg_decarb_HB"/>
    <property type="match status" value="1"/>
</dbReference>
<dbReference type="Pfam" id="PF17944">
    <property type="entry name" value="Arg_decarbox_C"/>
    <property type="match status" value="1"/>
</dbReference>
<dbReference type="Pfam" id="PF02784">
    <property type="entry name" value="Orn_Arg_deC_N"/>
    <property type="match status" value="1"/>
</dbReference>
<dbReference type="PIRSF" id="PIRSF001336">
    <property type="entry name" value="Arg_decrbxlase"/>
    <property type="match status" value="1"/>
</dbReference>
<dbReference type="PRINTS" id="PR01180">
    <property type="entry name" value="ARGDCRBXLASE"/>
</dbReference>
<dbReference type="PRINTS" id="PR01179">
    <property type="entry name" value="ODADCRBXLASE"/>
</dbReference>
<dbReference type="SUPFAM" id="SSF50621">
    <property type="entry name" value="Alanine racemase C-terminal domain-like"/>
    <property type="match status" value="1"/>
</dbReference>
<dbReference type="SUPFAM" id="SSF51419">
    <property type="entry name" value="PLP-binding barrel"/>
    <property type="match status" value="1"/>
</dbReference>
<dbReference type="PROSITE" id="PS00878">
    <property type="entry name" value="ODR_DC_2_1"/>
    <property type="match status" value="1"/>
</dbReference>
<dbReference type="PROSITE" id="PS00879">
    <property type="entry name" value="ODR_DC_2_2"/>
    <property type="match status" value="1"/>
</dbReference>
<protein>
    <recommendedName>
        <fullName evidence="1">Biosynthetic arginine decarboxylase</fullName>
        <shortName evidence="1">ADC</shortName>
        <ecNumber evidence="1">4.1.1.19</ecNumber>
    </recommendedName>
</protein>
<name>SPEA_ECO5E</name>
<proteinExistence type="inferred from homology"/>
<comment type="function">
    <text evidence="1">Catalyzes the biosynthesis of agmatine from arginine.</text>
</comment>
<comment type="catalytic activity">
    <reaction evidence="1">
        <text>L-arginine + H(+) = agmatine + CO2</text>
        <dbReference type="Rhea" id="RHEA:17641"/>
        <dbReference type="ChEBI" id="CHEBI:15378"/>
        <dbReference type="ChEBI" id="CHEBI:16526"/>
        <dbReference type="ChEBI" id="CHEBI:32682"/>
        <dbReference type="ChEBI" id="CHEBI:58145"/>
        <dbReference type="EC" id="4.1.1.19"/>
    </reaction>
</comment>
<comment type="cofactor">
    <cofactor evidence="1">
        <name>Mg(2+)</name>
        <dbReference type="ChEBI" id="CHEBI:18420"/>
    </cofactor>
</comment>
<comment type="cofactor">
    <cofactor evidence="1">
        <name>pyridoxal 5'-phosphate</name>
        <dbReference type="ChEBI" id="CHEBI:597326"/>
    </cofactor>
</comment>
<comment type="pathway">
    <text evidence="1">Amine and polyamine biosynthesis; agmatine biosynthesis; agmatine from L-arginine: step 1/1.</text>
</comment>
<comment type="similarity">
    <text evidence="1">Belongs to the Orn/Lys/Arg decarboxylase class-II family. SpeA subfamily.</text>
</comment>
<organism>
    <name type="scientific">Escherichia coli O157:H7 (strain EC4115 / EHEC)</name>
    <dbReference type="NCBI Taxonomy" id="444450"/>
    <lineage>
        <taxon>Bacteria</taxon>
        <taxon>Pseudomonadati</taxon>
        <taxon>Pseudomonadota</taxon>
        <taxon>Gammaproteobacteria</taxon>
        <taxon>Enterobacterales</taxon>
        <taxon>Enterobacteriaceae</taxon>
        <taxon>Escherichia</taxon>
    </lineage>
</organism>
<feature type="chain" id="PRO_1000145592" description="Biosynthetic arginine decarboxylase">
    <location>
        <begin position="1"/>
        <end position="632"/>
    </location>
</feature>
<feature type="binding site" evidence="1">
    <location>
        <begin position="281"/>
        <end position="291"/>
    </location>
    <ligand>
        <name>substrate</name>
    </ligand>
</feature>
<feature type="modified residue" description="N6-(pyridoxal phosphate)lysine" evidence="1">
    <location>
        <position position="101"/>
    </location>
</feature>
<gene>
    <name evidence="1" type="primary">speA</name>
    <name type="ordered locus">ECH74115_4241</name>
</gene>
<evidence type="ECO:0000255" key="1">
    <source>
        <dbReference type="HAMAP-Rule" id="MF_01417"/>
    </source>
</evidence>
<reference key="1">
    <citation type="journal article" date="2011" name="Proc. Natl. Acad. Sci. U.S.A.">
        <title>Genomic anatomy of Escherichia coli O157:H7 outbreaks.</title>
        <authorList>
            <person name="Eppinger M."/>
            <person name="Mammel M.K."/>
            <person name="Leclerc J.E."/>
            <person name="Ravel J."/>
            <person name="Cebula T.A."/>
        </authorList>
    </citation>
    <scope>NUCLEOTIDE SEQUENCE [LARGE SCALE GENOMIC DNA]</scope>
    <source>
        <strain>EC4115 / EHEC</strain>
    </source>
</reference>
<accession>B5YQD6</accession>
<keyword id="KW-0210">Decarboxylase</keyword>
<keyword id="KW-0456">Lyase</keyword>
<keyword id="KW-0460">Magnesium</keyword>
<keyword id="KW-0479">Metal-binding</keyword>
<keyword id="KW-0620">Polyamine biosynthesis</keyword>
<keyword id="KW-0661">Putrescine biosynthesis</keyword>
<keyword id="KW-0663">Pyridoxal phosphate</keyword>
<keyword id="KW-0745">Spermidine biosynthesis</keyword>
<sequence length="632" mass="71181">MSSQEASKMLRTYNIAWWGNNYYDVNELGHISVCPDPDVPEARVDLAQLVKTREAQGQRLPALFCFPQILQHRLRSINAAFKRARESYGYNGDYFLVYPIKVNQHRRVIESLIHSGEPLGLEAGSKAELMAVLAHAGMTRSVIVCNGYKDREYIRLALIGEKMGHKVYLVIEKMSEIAIVLDEAERLNVVPRLGVRARLASQGSGKWQSSGGEKSKFGLAATQVLQLVETLREAGRLDSLQLLHFHLGSQMANIRDIATGVRESARFYVELHKLGVNIQCFDVGGGLGVDYEGTRSQSDCSVNYGLNEYANNIIWAIGDACEENGLPHPTVITESGRAVTAHHTVLVSNIIGVERNEYTVPTAPAEDAPRALQSMWETWQEMHEPGTRRSLREWLHDSQMDLHDIHIGYSSGTFSLQERAWAEQLYLSMCHEVQKQLDPQNRAHRPIIDELQERMADKMYVNFSLFQSMPDAWGIDQLFPVLPLEGLDQVPERRAVLLDITCDSDGAIDHYIDGDGIATTMPMPEYDPENPPMLGFFMVGAYQEILGNMHNLFGDTEAVDVFVFPDGSVEVELSDEGDTVADMLQYVQLDPKTLLTQFRDQVKKTDLDAELQQQFLEEFEAGLYGYTYLEDE</sequence>